<keyword id="KW-0472">Membrane</keyword>
<keyword id="KW-1185">Reference proteome</keyword>
<keyword id="KW-0812">Transmembrane</keyword>
<keyword id="KW-1133">Transmembrane helix</keyword>
<accession>Q753V6</accession>
<gene>
    <name type="primary">DLT1</name>
    <name type="ordered locus">AFR219C</name>
</gene>
<organism>
    <name type="scientific">Eremothecium gossypii (strain ATCC 10895 / CBS 109.51 / FGSC 9923 / NRRL Y-1056)</name>
    <name type="common">Yeast</name>
    <name type="synonym">Ashbya gossypii</name>
    <dbReference type="NCBI Taxonomy" id="284811"/>
    <lineage>
        <taxon>Eukaryota</taxon>
        <taxon>Fungi</taxon>
        <taxon>Dikarya</taxon>
        <taxon>Ascomycota</taxon>
        <taxon>Saccharomycotina</taxon>
        <taxon>Saccharomycetes</taxon>
        <taxon>Saccharomycetales</taxon>
        <taxon>Saccharomycetaceae</taxon>
        <taxon>Eremothecium</taxon>
    </lineage>
</organism>
<comment type="function">
    <text evidence="1">Required for growth under high-pressure and low-temperature conditions.</text>
</comment>
<comment type="subcellular location">
    <subcellularLocation>
        <location evidence="3">Membrane</location>
        <topology evidence="3">Multi-pass membrane protein</topology>
    </subcellularLocation>
</comment>
<comment type="similarity">
    <text evidence="3">Belongs to the DLT1 family.</text>
</comment>
<proteinExistence type="inferred from homology"/>
<reference key="1">
    <citation type="journal article" date="2004" name="Science">
        <title>The Ashbya gossypii genome as a tool for mapping the ancient Saccharomyces cerevisiae genome.</title>
        <authorList>
            <person name="Dietrich F.S."/>
            <person name="Voegeli S."/>
            <person name="Brachat S."/>
            <person name="Lerch A."/>
            <person name="Gates K."/>
            <person name="Steiner S."/>
            <person name="Mohr C."/>
            <person name="Poehlmann R."/>
            <person name="Luedi P."/>
            <person name="Choi S."/>
            <person name="Wing R.A."/>
            <person name="Flavier A."/>
            <person name="Gaffney T.D."/>
            <person name="Philippsen P."/>
        </authorList>
    </citation>
    <scope>NUCLEOTIDE SEQUENCE [LARGE SCALE GENOMIC DNA]</scope>
    <source>
        <strain>ATCC 10895 / CBS 109.51 / FGSC 9923 / NRRL Y-1056</strain>
    </source>
</reference>
<reference key="2">
    <citation type="journal article" date="2013" name="G3 (Bethesda)">
        <title>Genomes of Ashbya fungi isolated from insects reveal four mating-type loci, numerous translocations, lack of transposons, and distinct gene duplications.</title>
        <authorList>
            <person name="Dietrich F.S."/>
            <person name="Voegeli S."/>
            <person name="Kuo S."/>
            <person name="Philippsen P."/>
        </authorList>
    </citation>
    <scope>GENOME REANNOTATION</scope>
    <source>
        <strain>ATCC 10895 / CBS 109.51 / FGSC 9923 / NRRL Y-1056</strain>
    </source>
</reference>
<protein>
    <recommendedName>
        <fullName>Defect at low temperature protein 1</fullName>
    </recommendedName>
</protein>
<feature type="chain" id="PRO_0000399019" description="Defect at low temperature protein 1">
    <location>
        <begin position="1"/>
        <end position="274"/>
    </location>
</feature>
<feature type="topological domain" description="Cytoplasmic" evidence="2">
    <location>
        <begin position="1"/>
        <end position="13"/>
    </location>
</feature>
<feature type="transmembrane region" description="Helical" evidence="2">
    <location>
        <begin position="14"/>
        <end position="34"/>
    </location>
</feature>
<feature type="topological domain" description="Extracellular" evidence="2">
    <location>
        <begin position="35"/>
        <end position="43"/>
    </location>
</feature>
<feature type="transmembrane region" description="Helical" evidence="2">
    <location>
        <begin position="44"/>
        <end position="64"/>
    </location>
</feature>
<feature type="topological domain" description="Cytoplasmic" evidence="2">
    <location>
        <begin position="65"/>
        <end position="274"/>
    </location>
</feature>
<sequence>MGAVNIPTWARHSFATVLILLLLAFSLILPVDVIRRVSQMPHEILNTAIIVGAAITLLITFTSLSFGRLLVHRSCMQDIPKRYVPITERDLPNTRIRGEIYHKLEHCKQLAHDFSTPETRVVHAGLEPPAHVDHCGDDMLPPLLDYQACVKIIADRFKFQGILLNKYMLEPKLGMTFAAQLRRTVSENDCVDRNQLEEFITLYETIRYSGHPVTRGKFIRFMELCLLLVDFSLLTHRVDTPPSGEPSSTTDSATNFNAHVLYSRTEESISQSSA</sequence>
<evidence type="ECO:0000250" key="1"/>
<evidence type="ECO:0000255" key="2"/>
<evidence type="ECO:0000305" key="3"/>
<dbReference type="EMBL" id="AE016819">
    <property type="protein sequence ID" value="AAS53590.1"/>
    <property type="molecule type" value="Genomic_DNA"/>
</dbReference>
<dbReference type="RefSeq" id="NP_985766.1">
    <property type="nucleotide sequence ID" value="NM_211120.1"/>
</dbReference>
<dbReference type="FunCoup" id="Q753V6">
    <property type="interactions" value="21"/>
</dbReference>
<dbReference type="STRING" id="284811.Q753V6"/>
<dbReference type="EnsemblFungi" id="AAS53590">
    <property type="protein sequence ID" value="AAS53590"/>
    <property type="gene ID" value="AGOS_AFR219C"/>
</dbReference>
<dbReference type="GeneID" id="4622028"/>
<dbReference type="KEGG" id="ago:AGOS_AFR219C"/>
<dbReference type="eggNOG" id="ENOG502RAJJ">
    <property type="taxonomic scope" value="Eukaryota"/>
</dbReference>
<dbReference type="HOGENOM" id="CLU_066044_0_0_1"/>
<dbReference type="InParanoid" id="Q753V6"/>
<dbReference type="OMA" id="ITHHEFE"/>
<dbReference type="OrthoDB" id="4096362at2759"/>
<dbReference type="Proteomes" id="UP000000591">
    <property type="component" value="Chromosome VI"/>
</dbReference>
<dbReference type="GO" id="GO:0016020">
    <property type="term" value="C:membrane"/>
    <property type="evidence" value="ECO:0007669"/>
    <property type="project" value="UniProtKB-SubCell"/>
</dbReference>
<dbReference type="InterPro" id="IPR038869">
    <property type="entry name" value="DLT1"/>
</dbReference>
<dbReference type="PANTHER" id="PTHR40021">
    <property type="entry name" value="DEFECT AT LOW TEMPERATURE PROTEIN 1"/>
    <property type="match status" value="1"/>
</dbReference>
<dbReference type="PANTHER" id="PTHR40021:SF1">
    <property type="entry name" value="DEFECT AT LOW TEMPERATURE PROTEIN 1"/>
    <property type="match status" value="1"/>
</dbReference>
<name>DLT1_EREGS</name>